<feature type="chain" id="PRO_0000410512" description="Putative transcription factor 001R">
    <location>
        <begin position="1"/>
        <end position="256"/>
    </location>
</feature>
<keyword id="KW-0010">Activator</keyword>
<keyword id="KW-1185">Reference proteome</keyword>
<keyword id="KW-0804">Transcription</keyword>
<keyword id="KW-0805">Transcription regulation</keyword>
<reference key="1">
    <citation type="journal article" date="2004" name="Virology">
        <title>Comparative genomic analyses of frog virus 3, type species of the genus Ranavirus (family Iridoviridae).</title>
        <authorList>
            <person name="Tan W.G."/>
            <person name="Barkman T.J."/>
            <person name="Gregory Chinchar V."/>
            <person name="Essani K."/>
        </authorList>
    </citation>
    <scope>NUCLEOTIDE SEQUENCE [LARGE SCALE GENOMIC DNA]</scope>
</reference>
<proteinExistence type="predicted"/>
<organism>
    <name type="scientific">Frog virus 3 (isolate Goorha)</name>
    <name type="common">FV-3</name>
    <dbReference type="NCBI Taxonomy" id="654924"/>
    <lineage>
        <taxon>Viruses</taxon>
        <taxon>Varidnaviria</taxon>
        <taxon>Bamfordvirae</taxon>
        <taxon>Nucleocytoviricota</taxon>
        <taxon>Megaviricetes</taxon>
        <taxon>Pimascovirales</taxon>
        <taxon>Iridoviridae</taxon>
        <taxon>Alphairidovirinae</taxon>
        <taxon>Ranavirus</taxon>
        <taxon>Frog virus 3</taxon>
    </lineage>
</organism>
<protein>
    <recommendedName>
        <fullName>Putative transcription factor 001R</fullName>
    </recommendedName>
</protein>
<evidence type="ECO:0000305" key="1"/>
<name>001R_FRG3G</name>
<gene>
    <name type="ORF">FV3-001R</name>
</gene>
<dbReference type="EMBL" id="AY548484">
    <property type="protein sequence ID" value="AAT09660.1"/>
    <property type="molecule type" value="Genomic_DNA"/>
</dbReference>
<dbReference type="RefSeq" id="YP_031579.1">
    <property type="nucleotide sequence ID" value="NC_005946.1"/>
</dbReference>
<dbReference type="SwissPalm" id="Q6GZX4"/>
<dbReference type="KEGG" id="vg:2947773"/>
<dbReference type="Proteomes" id="UP000008770">
    <property type="component" value="Segment"/>
</dbReference>
<dbReference type="GO" id="GO:0046782">
    <property type="term" value="P:regulation of viral transcription"/>
    <property type="evidence" value="ECO:0007669"/>
    <property type="project" value="InterPro"/>
</dbReference>
<dbReference type="InterPro" id="IPR007031">
    <property type="entry name" value="Poxvirus_VLTF3"/>
</dbReference>
<dbReference type="Pfam" id="PF04947">
    <property type="entry name" value="Pox_VLTF3"/>
    <property type="match status" value="1"/>
</dbReference>
<accession>Q6GZX4</accession>
<organismHost>
    <name type="scientific">Dryophytes versicolor</name>
    <name type="common">chameleon treefrog</name>
    <dbReference type="NCBI Taxonomy" id="30343"/>
</organismHost>
<organismHost>
    <name type="scientific">Lithobates pipiens</name>
    <name type="common">Northern leopard frog</name>
    <name type="synonym">Rana pipiens</name>
    <dbReference type="NCBI Taxonomy" id="8404"/>
</organismHost>
<organismHost>
    <name type="scientific">Lithobates sylvaticus</name>
    <name type="common">Wood frog</name>
    <name type="synonym">Rana sylvatica</name>
    <dbReference type="NCBI Taxonomy" id="45438"/>
</organismHost>
<organismHost>
    <name type="scientific">Notophthalmus viridescens</name>
    <name type="common">Eastern newt</name>
    <name type="synonym">Triturus viridescens</name>
    <dbReference type="NCBI Taxonomy" id="8316"/>
</organismHost>
<sequence length="256" mass="29735">MAFSAEDVLKEYDRRRRMEALLLSLYYPNDRKLLDYKEWSPPRVQVECPKAPVEWNNPPSEKGLIVGHFSGIKYKGEKAQASEVDVNKMCCWVSKFKDAMRRYQGIQTCKIPGKVLSDLDAKIKAYNLTVEGVEGFVRYSRVTKQHVAAFLKELRHSKQYENVNLIHYILTDKRVDIQHLEKDLVKDFKALVESAHRMRQGHMINVKYILYQLLKKHGHGPDGPDILTVKTGSKGVLYDDSFRKIYTDLGWKFTPL</sequence>
<comment type="function">
    <text evidence="1">Transcription activation.</text>
</comment>